<gene>
    <name type="primary">hptS</name>
    <name type="ordered locus">SAR0215</name>
</gene>
<name>HPTS_STAAR</name>
<keyword id="KW-0067">ATP-binding</keyword>
<keyword id="KW-1003">Cell membrane</keyword>
<keyword id="KW-0418">Kinase</keyword>
<keyword id="KW-0472">Membrane</keyword>
<keyword id="KW-0547">Nucleotide-binding</keyword>
<keyword id="KW-0597">Phosphoprotein</keyword>
<keyword id="KW-0808">Transferase</keyword>
<keyword id="KW-0812">Transmembrane</keyword>
<keyword id="KW-1133">Transmembrane helix</keyword>
<keyword id="KW-0902">Two-component regulatory system</keyword>
<feature type="chain" id="PRO_0000299121" description="Sensor protein kinase HptS">
    <location>
        <begin position="1"/>
        <end position="518"/>
    </location>
</feature>
<feature type="transmembrane region" description="Helical" evidence="3">
    <location>
        <begin position="20"/>
        <end position="40"/>
    </location>
</feature>
<feature type="transmembrane region" description="Helical" evidence="3">
    <location>
        <begin position="222"/>
        <end position="242"/>
    </location>
</feature>
<feature type="domain" description="Histidine kinase">
    <location>
        <begin position="297"/>
        <end position="513"/>
    </location>
</feature>
<feature type="modified residue" description="Phosphohistidine; by autocatalysis" evidence="1">
    <location>
        <position position="325"/>
    </location>
</feature>
<protein>
    <recommendedName>
        <fullName>Sensor protein kinase HptS</fullName>
        <ecNumber>2.7.13.3</ecNumber>
    </recommendedName>
</protein>
<proteinExistence type="inferred from homology"/>
<comment type="function">
    <text evidence="2">Member of the two-component regulatory system HptS/HptR that regulates genes involved in hexose phosphate transport system in response to changes in extracellular phosphate sources. May act as a sensor protein kinase which is autophosphorylated at a histidine residue and transfers its phosphate group to the conserved aspartic acid residue in the regulatory domain of HptS. In turn, HptS antagonizes CcpA-dependent transcription of a subset of CcpA-regulated genes involved in antibiotic susceptibility.</text>
</comment>
<comment type="catalytic activity">
    <reaction>
        <text>ATP + protein L-histidine = ADP + protein N-phospho-L-histidine.</text>
        <dbReference type="EC" id="2.7.13.3"/>
    </reaction>
</comment>
<comment type="subcellular location">
    <subcellularLocation>
        <location evidence="4">Cell membrane</location>
        <topology evidence="4">Multi-pass membrane protein</topology>
    </subcellularLocation>
</comment>
<comment type="PTM">
    <text evidence="1">Autophosphorylated.</text>
</comment>
<accession>Q6GK92</accession>
<reference key="1">
    <citation type="journal article" date="2004" name="Proc. Natl. Acad. Sci. U.S.A.">
        <title>Complete genomes of two clinical Staphylococcus aureus strains: evidence for the rapid evolution of virulence and drug resistance.</title>
        <authorList>
            <person name="Holden M.T.G."/>
            <person name="Feil E.J."/>
            <person name="Lindsay J.A."/>
            <person name="Peacock S.J."/>
            <person name="Day N.P.J."/>
            <person name="Enright M.C."/>
            <person name="Foster T.J."/>
            <person name="Moore C.E."/>
            <person name="Hurst L."/>
            <person name="Atkin R."/>
            <person name="Barron A."/>
            <person name="Bason N."/>
            <person name="Bentley S.D."/>
            <person name="Chillingworth C."/>
            <person name="Chillingworth T."/>
            <person name="Churcher C."/>
            <person name="Clark L."/>
            <person name="Corton C."/>
            <person name="Cronin A."/>
            <person name="Doggett J."/>
            <person name="Dowd L."/>
            <person name="Feltwell T."/>
            <person name="Hance Z."/>
            <person name="Harris B."/>
            <person name="Hauser H."/>
            <person name="Holroyd S."/>
            <person name="Jagels K."/>
            <person name="James K.D."/>
            <person name="Lennard N."/>
            <person name="Line A."/>
            <person name="Mayes R."/>
            <person name="Moule S."/>
            <person name="Mungall K."/>
            <person name="Ormond D."/>
            <person name="Quail M.A."/>
            <person name="Rabbinowitsch E."/>
            <person name="Rutherford K.M."/>
            <person name="Sanders M."/>
            <person name="Sharp S."/>
            <person name="Simmonds M."/>
            <person name="Stevens K."/>
            <person name="Whitehead S."/>
            <person name="Barrell B.G."/>
            <person name="Spratt B.G."/>
            <person name="Parkhill J."/>
        </authorList>
    </citation>
    <scope>NUCLEOTIDE SEQUENCE [LARGE SCALE GENOMIC DNA]</scope>
    <source>
        <strain>MRSA252</strain>
    </source>
</reference>
<evidence type="ECO:0000250" key="1"/>
<evidence type="ECO:0000250" key="2">
    <source>
        <dbReference type="UniProtKB" id="Q2G1E0"/>
    </source>
</evidence>
<evidence type="ECO:0000255" key="3"/>
<evidence type="ECO:0000305" key="4"/>
<organism>
    <name type="scientific">Staphylococcus aureus (strain MRSA252)</name>
    <dbReference type="NCBI Taxonomy" id="282458"/>
    <lineage>
        <taxon>Bacteria</taxon>
        <taxon>Bacillati</taxon>
        <taxon>Bacillota</taxon>
        <taxon>Bacilli</taxon>
        <taxon>Bacillales</taxon>
        <taxon>Staphylococcaceae</taxon>
        <taxon>Staphylococcus</taxon>
    </lineage>
</organism>
<sequence>MTAYKPYRHQLRRSLFASTIFPVFLVIIIGLVSFYAIYIWIEHRTIHQHVDESQSSLHHTEKQIQTFITQHNNSFQELDLTNHHDVTATKRELLKLIHQQPATLYYELSGPNQFITNNYEHLNTKNMYLFSTHQLKFKNSTYMLKIYIANTPRLSEIKKDSRQFALIVDQYDNILYANDDRFTIGEKYRPQQFGFMNESVKLNHADHRLIIYKDIHENIEDGITLLIVMAVVLVLLVIFGFISADNMAKRQTKDIETIIQKIYYAKNRHLGTYTPLKNNSELEEINNYIYDLFESNEQLIHSIEHTERRLRDIQLKEIERQFQPHFLFNTMQTIQYLITLSPKLAQTVVQQLSQMLRYSLRTNSHTVELNEELNYIEQYVAIQNIRFDDMIKLHIESSEEARHQTIGKMMLQPLIENAIKHGRDTESLDITIRLTLARQNLHVLVCDNGIGMSSSRLQYVRQSLNNDVFDTKHLGLNHLHNKAMIQYGSHARLHIFSKRNQGTLICYKIPLSRGNVDV</sequence>
<dbReference type="EC" id="2.7.13.3"/>
<dbReference type="EMBL" id="BX571856">
    <property type="protein sequence ID" value="CAG39242.1"/>
    <property type="molecule type" value="Genomic_DNA"/>
</dbReference>
<dbReference type="RefSeq" id="WP_000127979.1">
    <property type="nucleotide sequence ID" value="NC_002952.2"/>
</dbReference>
<dbReference type="SMR" id="Q6GK92"/>
<dbReference type="KEGG" id="sar:SAR0215"/>
<dbReference type="HOGENOM" id="CLU_525720_0_0_9"/>
<dbReference type="Proteomes" id="UP000000596">
    <property type="component" value="Chromosome"/>
</dbReference>
<dbReference type="GO" id="GO:0005886">
    <property type="term" value="C:plasma membrane"/>
    <property type="evidence" value="ECO:0007669"/>
    <property type="project" value="UniProtKB-SubCell"/>
</dbReference>
<dbReference type="GO" id="GO:0005524">
    <property type="term" value="F:ATP binding"/>
    <property type="evidence" value="ECO:0007669"/>
    <property type="project" value="UniProtKB-KW"/>
</dbReference>
<dbReference type="GO" id="GO:0000155">
    <property type="term" value="F:phosphorelay sensor kinase activity"/>
    <property type="evidence" value="ECO:0007669"/>
    <property type="project" value="InterPro"/>
</dbReference>
<dbReference type="Gene3D" id="3.30.565.10">
    <property type="entry name" value="Histidine kinase-like ATPase, C-terminal domain"/>
    <property type="match status" value="1"/>
</dbReference>
<dbReference type="InterPro" id="IPR050640">
    <property type="entry name" value="Bact_2-comp_sensor_kinase"/>
</dbReference>
<dbReference type="InterPro" id="IPR036890">
    <property type="entry name" value="HATPase_C_sf"/>
</dbReference>
<dbReference type="InterPro" id="IPR010559">
    <property type="entry name" value="Sig_transdc_His_kin_internal"/>
</dbReference>
<dbReference type="PANTHER" id="PTHR34220">
    <property type="entry name" value="SENSOR HISTIDINE KINASE YPDA"/>
    <property type="match status" value="1"/>
</dbReference>
<dbReference type="PANTHER" id="PTHR34220:SF11">
    <property type="entry name" value="SENSOR PROTEIN KINASE HPTS"/>
    <property type="match status" value="1"/>
</dbReference>
<dbReference type="Pfam" id="PF02518">
    <property type="entry name" value="HATPase_c"/>
    <property type="match status" value="1"/>
</dbReference>
<dbReference type="Pfam" id="PF06580">
    <property type="entry name" value="His_kinase"/>
    <property type="match status" value="1"/>
</dbReference>
<dbReference type="SUPFAM" id="SSF55874">
    <property type="entry name" value="ATPase domain of HSP90 chaperone/DNA topoisomerase II/histidine kinase"/>
    <property type="match status" value="1"/>
</dbReference>